<evidence type="ECO:0000255" key="1">
    <source>
        <dbReference type="HAMAP-Rule" id="MF_00291"/>
    </source>
</evidence>
<evidence type="ECO:0000305" key="2"/>
<dbReference type="EMBL" id="CP000472">
    <property type="protein sequence ID" value="ACJ30215.1"/>
    <property type="molecule type" value="Genomic_DNA"/>
</dbReference>
<dbReference type="RefSeq" id="WP_020913562.1">
    <property type="nucleotide sequence ID" value="NC_011566.1"/>
</dbReference>
<dbReference type="SMR" id="B8CQ85"/>
<dbReference type="STRING" id="225849.swp_3523"/>
<dbReference type="KEGG" id="swp:swp_3523"/>
<dbReference type="eggNOG" id="COG0052">
    <property type="taxonomic scope" value="Bacteria"/>
</dbReference>
<dbReference type="HOGENOM" id="CLU_040318_1_2_6"/>
<dbReference type="OrthoDB" id="9808036at2"/>
<dbReference type="Proteomes" id="UP000000753">
    <property type="component" value="Chromosome"/>
</dbReference>
<dbReference type="GO" id="GO:0022627">
    <property type="term" value="C:cytosolic small ribosomal subunit"/>
    <property type="evidence" value="ECO:0007669"/>
    <property type="project" value="TreeGrafter"/>
</dbReference>
<dbReference type="GO" id="GO:0003735">
    <property type="term" value="F:structural constituent of ribosome"/>
    <property type="evidence" value="ECO:0007669"/>
    <property type="project" value="InterPro"/>
</dbReference>
<dbReference type="GO" id="GO:0006412">
    <property type="term" value="P:translation"/>
    <property type="evidence" value="ECO:0007669"/>
    <property type="project" value="UniProtKB-UniRule"/>
</dbReference>
<dbReference type="CDD" id="cd01425">
    <property type="entry name" value="RPS2"/>
    <property type="match status" value="1"/>
</dbReference>
<dbReference type="FunFam" id="1.10.287.610:FF:000001">
    <property type="entry name" value="30S ribosomal protein S2"/>
    <property type="match status" value="1"/>
</dbReference>
<dbReference type="Gene3D" id="3.40.50.10490">
    <property type="entry name" value="Glucose-6-phosphate isomerase like protein, domain 1"/>
    <property type="match status" value="1"/>
</dbReference>
<dbReference type="Gene3D" id="1.10.287.610">
    <property type="entry name" value="Helix hairpin bin"/>
    <property type="match status" value="1"/>
</dbReference>
<dbReference type="HAMAP" id="MF_00291_B">
    <property type="entry name" value="Ribosomal_uS2_B"/>
    <property type="match status" value="1"/>
</dbReference>
<dbReference type="InterPro" id="IPR001865">
    <property type="entry name" value="Ribosomal_uS2"/>
</dbReference>
<dbReference type="InterPro" id="IPR005706">
    <property type="entry name" value="Ribosomal_uS2_bac/mit/plastid"/>
</dbReference>
<dbReference type="InterPro" id="IPR018130">
    <property type="entry name" value="Ribosomal_uS2_CS"/>
</dbReference>
<dbReference type="InterPro" id="IPR023591">
    <property type="entry name" value="Ribosomal_uS2_flav_dom_sf"/>
</dbReference>
<dbReference type="NCBIfam" id="TIGR01011">
    <property type="entry name" value="rpsB_bact"/>
    <property type="match status" value="1"/>
</dbReference>
<dbReference type="PANTHER" id="PTHR12534">
    <property type="entry name" value="30S RIBOSOMAL PROTEIN S2 PROKARYOTIC AND ORGANELLAR"/>
    <property type="match status" value="1"/>
</dbReference>
<dbReference type="PANTHER" id="PTHR12534:SF0">
    <property type="entry name" value="SMALL RIBOSOMAL SUBUNIT PROTEIN US2M"/>
    <property type="match status" value="1"/>
</dbReference>
<dbReference type="Pfam" id="PF00318">
    <property type="entry name" value="Ribosomal_S2"/>
    <property type="match status" value="1"/>
</dbReference>
<dbReference type="PRINTS" id="PR00395">
    <property type="entry name" value="RIBOSOMALS2"/>
</dbReference>
<dbReference type="SUPFAM" id="SSF52313">
    <property type="entry name" value="Ribosomal protein S2"/>
    <property type="match status" value="1"/>
</dbReference>
<dbReference type="PROSITE" id="PS00962">
    <property type="entry name" value="RIBOSOMAL_S2_1"/>
    <property type="match status" value="1"/>
</dbReference>
<dbReference type="PROSITE" id="PS00963">
    <property type="entry name" value="RIBOSOMAL_S2_2"/>
    <property type="match status" value="1"/>
</dbReference>
<proteinExistence type="inferred from homology"/>
<protein>
    <recommendedName>
        <fullName evidence="1">Small ribosomal subunit protein uS2</fullName>
    </recommendedName>
    <alternativeName>
        <fullName evidence="2">30S ribosomal protein S2</fullName>
    </alternativeName>
</protein>
<sequence length="242" mass="26787">MTTVSMRDMLQAGVHFGHQTRYWNPKMKPFIFGARNGVHIINLEHTVPMFNEALAFISNIASKKGKVLFVGTKRAASEAIKEAAVSCDQFYVDHRWLGGMLTNWKTVRQSIKRLKDLESQSIDGTFDKLTKKEALMRTRELEKLEKSLGGIKNMAGLPDVIFVIGADHEHIAIKEANNLGIPVVAVVDTNSSPDGINYIIPGNDDAMRSIRLYTESVATAAKAGRNQDLAVQAEQDGFVEAE</sequence>
<reference key="1">
    <citation type="journal article" date="2008" name="PLoS ONE">
        <title>Environmental adaptation: genomic analysis of the piezotolerant and psychrotolerant deep-sea iron reducing bacterium Shewanella piezotolerans WP3.</title>
        <authorList>
            <person name="Wang F."/>
            <person name="Wang J."/>
            <person name="Jian H."/>
            <person name="Zhang B."/>
            <person name="Li S."/>
            <person name="Wang F."/>
            <person name="Zeng X."/>
            <person name="Gao L."/>
            <person name="Bartlett D.H."/>
            <person name="Yu J."/>
            <person name="Hu S."/>
            <person name="Xiao X."/>
        </authorList>
    </citation>
    <scope>NUCLEOTIDE SEQUENCE [LARGE SCALE GENOMIC DNA]</scope>
    <source>
        <strain>WP3 / JCM 13877</strain>
    </source>
</reference>
<keyword id="KW-0687">Ribonucleoprotein</keyword>
<keyword id="KW-0689">Ribosomal protein</keyword>
<feature type="chain" id="PRO_1000119432" description="Small ribosomal subunit protein uS2">
    <location>
        <begin position="1"/>
        <end position="242"/>
    </location>
</feature>
<comment type="similarity">
    <text evidence="1">Belongs to the universal ribosomal protein uS2 family.</text>
</comment>
<gene>
    <name evidence="1" type="primary">rpsB</name>
    <name type="ordered locus">swp_3523</name>
</gene>
<name>RS2_SHEPW</name>
<organism>
    <name type="scientific">Shewanella piezotolerans (strain WP3 / JCM 13877)</name>
    <dbReference type="NCBI Taxonomy" id="225849"/>
    <lineage>
        <taxon>Bacteria</taxon>
        <taxon>Pseudomonadati</taxon>
        <taxon>Pseudomonadota</taxon>
        <taxon>Gammaproteobacteria</taxon>
        <taxon>Alteromonadales</taxon>
        <taxon>Shewanellaceae</taxon>
        <taxon>Shewanella</taxon>
    </lineage>
</organism>
<accession>B8CQ85</accession>